<keyword id="KW-0066">ATP synthesis</keyword>
<keyword id="KW-0138">CF(0)</keyword>
<keyword id="KW-0375">Hydrogen ion transport</keyword>
<keyword id="KW-0406">Ion transport</keyword>
<keyword id="KW-0433">Leucine-rich repeat</keyword>
<keyword id="KW-0460">Magnesium</keyword>
<keyword id="KW-0472">Membrane</keyword>
<keyword id="KW-0479">Metal-binding</keyword>
<keyword id="KW-0496">Mitochondrion</keyword>
<keyword id="KW-0999">Mitochondrion inner membrane</keyword>
<keyword id="KW-1185">Reference proteome</keyword>
<keyword id="KW-0677">Repeat</keyword>
<keyword id="KW-0809">Transit peptide</keyword>
<keyword id="KW-0813">Transport</keyword>
<protein>
    <recommendedName>
        <fullName evidence="3">ATP synthase subunit s, mitochondrial</fullName>
    </recommendedName>
    <alternativeName>
        <fullName>ATP synthase-coupling factor B</fullName>
    </alternativeName>
    <alternativeName>
        <fullName evidence="2">Distal membrane arm assembly complex 2-like protein</fullName>
    </alternativeName>
    <alternativeName>
        <fullName>Mitochondrial ATP synthase regulatory component factor B</fullName>
    </alternativeName>
</protein>
<evidence type="ECO:0000250" key="1">
    <source>
        <dbReference type="UniProtKB" id="P22027"/>
    </source>
</evidence>
<evidence type="ECO:0000250" key="2">
    <source>
        <dbReference type="UniProtKB" id="Q99766"/>
    </source>
</evidence>
<evidence type="ECO:0000305" key="3"/>
<evidence type="ECO:0000312" key="4">
    <source>
        <dbReference type="MGI" id="MGI:1915305"/>
    </source>
</evidence>
<proteinExistence type="evidence at protein level"/>
<name>ATP5S_MOUSE</name>
<accession>Q9CRA7</accession>
<accession>Q8R2M3</accession>
<sequence>MMMFGKISRQLCSLKKIPWSCDSRYFWEWLNTVFNKVDYERLRDVGPDRAASEWLLRCGAKVRYCGHQKWLHDYNTLPGSSIDRYKIQAIDATDSCIMDIGLDHMVGLEHVEKITLCKCHYIEDNCLQRLSQLENLRKSLLELEIIACGNVTDNGVIALRHFRNLKYLFLSDLPGVKDKEYLAQVFKTALPSLELKLNLK</sequence>
<feature type="transit peptide" description="Mitochondrion" evidence="1">
    <location>
        <begin position="1"/>
        <end position="25"/>
    </location>
</feature>
<feature type="chain" id="PRO_0000002539" description="ATP synthase subunit s, mitochondrial">
    <location>
        <begin position="26"/>
        <end position="200"/>
    </location>
</feature>
<feature type="repeat" description="LRR 1" evidence="1">
    <location>
        <begin position="62"/>
        <end position="87"/>
    </location>
</feature>
<feature type="repeat" description="LRR 2" evidence="1">
    <location>
        <begin position="88"/>
        <end position="116"/>
    </location>
</feature>
<feature type="repeat" description="LRR 3" evidence="1">
    <location>
        <begin position="117"/>
        <end position="141"/>
    </location>
</feature>
<feature type="repeat" description="LRR 4" evidence="1">
    <location>
        <begin position="142"/>
        <end position="173"/>
    </location>
</feature>
<feature type="region of interest" description="N-terminal domain" evidence="1">
    <location>
        <begin position="1"/>
        <end position="61"/>
    </location>
</feature>
<feature type="binding site" evidence="1">
    <location>
        <position position="59"/>
    </location>
    <ligand>
        <name>Mg(2+)</name>
        <dbReference type="ChEBI" id="CHEBI:18420"/>
    </ligand>
</feature>
<feature type="binding site" evidence="1">
    <location>
        <position position="93"/>
    </location>
    <ligand>
        <name>Mg(2+)</name>
        <dbReference type="ChEBI" id="CHEBI:18420"/>
    </ligand>
</feature>
<feature type="sequence conflict" description="In Ref. 2; AAH27442." evidence="3" ref="2">
    <original>V</original>
    <variation>I</variation>
    <location>
        <position position="156"/>
    </location>
</feature>
<dbReference type="EMBL" id="AK003725">
    <property type="protein sequence ID" value="BAB22960.1"/>
    <property type="molecule type" value="mRNA"/>
</dbReference>
<dbReference type="EMBL" id="AK009141">
    <property type="status" value="NOT_ANNOTATED_CDS"/>
    <property type="molecule type" value="mRNA"/>
</dbReference>
<dbReference type="EMBL" id="BC027442">
    <property type="protein sequence ID" value="AAH27442.1"/>
    <property type="molecule type" value="mRNA"/>
</dbReference>
<dbReference type="CCDS" id="CCDS25954.1"/>
<dbReference type="RefSeq" id="NP_001348619.1">
    <property type="nucleotide sequence ID" value="NM_001361690.1"/>
</dbReference>
<dbReference type="RefSeq" id="NP_001348620.1">
    <property type="nucleotide sequence ID" value="NM_001361691.1"/>
</dbReference>
<dbReference type="RefSeq" id="NP_080812.1">
    <property type="nucleotide sequence ID" value="NM_026536.2"/>
</dbReference>
<dbReference type="RefSeq" id="XP_011242467.1">
    <property type="nucleotide sequence ID" value="XM_011244165.1"/>
</dbReference>
<dbReference type="RefSeq" id="XP_030102748.1">
    <property type="nucleotide sequence ID" value="XM_030246888.2"/>
</dbReference>
<dbReference type="RefSeq" id="XP_030102749.1">
    <property type="nucleotide sequence ID" value="XM_030246889.2"/>
</dbReference>
<dbReference type="SMR" id="Q9CRA7"/>
<dbReference type="BioGRID" id="212633">
    <property type="interactions" value="7"/>
</dbReference>
<dbReference type="FunCoup" id="Q9CRA7">
    <property type="interactions" value="2448"/>
</dbReference>
<dbReference type="STRING" id="10090.ENSMUSP00000152430"/>
<dbReference type="iPTMnet" id="Q9CRA7"/>
<dbReference type="PhosphoSitePlus" id="Q9CRA7"/>
<dbReference type="SwissPalm" id="Q9CRA7"/>
<dbReference type="PaxDb" id="10090-ENSMUSP00000021372"/>
<dbReference type="PeptideAtlas" id="Q9CRA7"/>
<dbReference type="ProteomicsDB" id="277269"/>
<dbReference type="Pumba" id="Q9CRA7"/>
<dbReference type="Antibodypedia" id="56666">
    <property type="antibodies" value="147 antibodies from 24 providers"/>
</dbReference>
<dbReference type="DNASU" id="68055"/>
<dbReference type="Ensembl" id="ENSMUST00000021372.6">
    <property type="protein sequence ID" value="ENSMUSP00000021372.6"/>
    <property type="gene ID" value="ENSMUSG00000054894.7"/>
</dbReference>
<dbReference type="Ensembl" id="ENSMUST00000220916.2">
    <property type="protein sequence ID" value="ENSMUSP00000152430.2"/>
    <property type="gene ID" value="ENSMUSG00000054894.7"/>
</dbReference>
<dbReference type="GeneID" id="68055"/>
<dbReference type="KEGG" id="mmu:68055"/>
<dbReference type="UCSC" id="uc007nsr.1">
    <property type="organism name" value="mouse"/>
</dbReference>
<dbReference type="AGR" id="MGI:1915305"/>
<dbReference type="CTD" id="27109"/>
<dbReference type="MGI" id="MGI:1915305">
    <property type="gene designation" value="Dmac2l"/>
</dbReference>
<dbReference type="VEuPathDB" id="HostDB:ENSMUSG00000054894"/>
<dbReference type="eggNOG" id="KOG3864">
    <property type="taxonomic scope" value="Eukaryota"/>
</dbReference>
<dbReference type="GeneTree" id="ENSGT00940000156502"/>
<dbReference type="HOGENOM" id="CLU_100746_0_0_1"/>
<dbReference type="InParanoid" id="Q9CRA7"/>
<dbReference type="OMA" id="IFDMLYV"/>
<dbReference type="OrthoDB" id="5859291at2759"/>
<dbReference type="PhylomeDB" id="Q9CRA7"/>
<dbReference type="TreeFam" id="TF315274"/>
<dbReference type="Reactome" id="R-MMU-163210">
    <property type="pathway name" value="Formation of ATP by chemiosmotic coupling"/>
</dbReference>
<dbReference type="Reactome" id="R-MMU-8949613">
    <property type="pathway name" value="Cristae formation"/>
</dbReference>
<dbReference type="BioGRID-ORCS" id="68055">
    <property type="hits" value="1 hit in 77 CRISPR screens"/>
</dbReference>
<dbReference type="ChiTaRS" id="Dmac2l">
    <property type="organism name" value="mouse"/>
</dbReference>
<dbReference type="PRO" id="PR:Q9CRA7"/>
<dbReference type="Proteomes" id="UP000000589">
    <property type="component" value="Chromosome 12"/>
</dbReference>
<dbReference type="RNAct" id="Q9CRA7">
    <property type="molecule type" value="protein"/>
</dbReference>
<dbReference type="Bgee" id="ENSMUSG00000054894">
    <property type="expression patterns" value="Expressed in interventricular septum and 242 other cell types or tissues"/>
</dbReference>
<dbReference type="ExpressionAtlas" id="Q9CRA7">
    <property type="expression patterns" value="baseline and differential"/>
</dbReference>
<dbReference type="GO" id="GO:0005743">
    <property type="term" value="C:mitochondrial inner membrane"/>
    <property type="evidence" value="ECO:0007669"/>
    <property type="project" value="UniProtKB-SubCell"/>
</dbReference>
<dbReference type="GO" id="GO:0005739">
    <property type="term" value="C:mitochondrion"/>
    <property type="evidence" value="ECO:0007005"/>
    <property type="project" value="MGI"/>
</dbReference>
<dbReference type="GO" id="GO:0045259">
    <property type="term" value="C:proton-transporting ATP synthase complex"/>
    <property type="evidence" value="ECO:0007669"/>
    <property type="project" value="UniProtKB-KW"/>
</dbReference>
<dbReference type="GO" id="GO:0046872">
    <property type="term" value="F:metal ion binding"/>
    <property type="evidence" value="ECO:0007669"/>
    <property type="project" value="UniProtKB-KW"/>
</dbReference>
<dbReference type="GO" id="GO:0006754">
    <property type="term" value="P:ATP biosynthetic process"/>
    <property type="evidence" value="ECO:0007669"/>
    <property type="project" value="UniProtKB-KW"/>
</dbReference>
<dbReference type="GO" id="GO:1902600">
    <property type="term" value="P:proton transmembrane transport"/>
    <property type="evidence" value="ECO:0007669"/>
    <property type="project" value="UniProtKB-KW"/>
</dbReference>
<dbReference type="FunFam" id="3.80.10.10:FF:000216">
    <property type="entry name" value="ATP synthase subunit s, mitochondrial isoform X1"/>
    <property type="match status" value="1"/>
</dbReference>
<dbReference type="Gene3D" id="3.80.10.10">
    <property type="entry name" value="Ribonuclease Inhibitor"/>
    <property type="match status" value="1"/>
</dbReference>
<dbReference type="InterPro" id="IPR032675">
    <property type="entry name" value="LRR_dom_sf"/>
</dbReference>
<dbReference type="SUPFAM" id="SSF52047">
    <property type="entry name" value="RNI-like"/>
    <property type="match status" value="1"/>
</dbReference>
<organism>
    <name type="scientific">Mus musculus</name>
    <name type="common">Mouse</name>
    <dbReference type="NCBI Taxonomy" id="10090"/>
    <lineage>
        <taxon>Eukaryota</taxon>
        <taxon>Metazoa</taxon>
        <taxon>Chordata</taxon>
        <taxon>Craniata</taxon>
        <taxon>Vertebrata</taxon>
        <taxon>Euteleostomi</taxon>
        <taxon>Mammalia</taxon>
        <taxon>Eutheria</taxon>
        <taxon>Euarchontoglires</taxon>
        <taxon>Glires</taxon>
        <taxon>Rodentia</taxon>
        <taxon>Myomorpha</taxon>
        <taxon>Muroidea</taxon>
        <taxon>Muridae</taxon>
        <taxon>Murinae</taxon>
        <taxon>Mus</taxon>
        <taxon>Mus</taxon>
    </lineage>
</organism>
<comment type="function">
    <text evidence="1">Involved in regulation of mitochondrial membrane ATP synthase. Necessary for H(+) conduction of ATP synthase. Facilitates energy-driven catalysis of ATP synthesis by blocking a proton leak through an alternative proton exit pathway.</text>
</comment>
<comment type="subunit">
    <text evidence="1">Homotetramer. Associates with ATP synthase.</text>
</comment>
<comment type="subcellular location">
    <subcellularLocation>
        <location evidence="1">Mitochondrion</location>
    </subcellularLocation>
    <subcellularLocation>
        <location evidence="1">Mitochondrion inner membrane</location>
    </subcellularLocation>
</comment>
<comment type="similarity">
    <text evidence="3">Belongs to the ATP synthase subunit s family.</text>
</comment>
<reference key="1">
    <citation type="journal article" date="2005" name="Science">
        <title>The transcriptional landscape of the mammalian genome.</title>
        <authorList>
            <person name="Carninci P."/>
            <person name="Kasukawa T."/>
            <person name="Katayama S."/>
            <person name="Gough J."/>
            <person name="Frith M.C."/>
            <person name="Maeda N."/>
            <person name="Oyama R."/>
            <person name="Ravasi T."/>
            <person name="Lenhard B."/>
            <person name="Wells C."/>
            <person name="Kodzius R."/>
            <person name="Shimokawa K."/>
            <person name="Bajic V.B."/>
            <person name="Brenner S.E."/>
            <person name="Batalov S."/>
            <person name="Forrest A.R."/>
            <person name="Zavolan M."/>
            <person name="Davis M.J."/>
            <person name="Wilming L.G."/>
            <person name="Aidinis V."/>
            <person name="Allen J.E."/>
            <person name="Ambesi-Impiombato A."/>
            <person name="Apweiler R."/>
            <person name="Aturaliya R.N."/>
            <person name="Bailey T.L."/>
            <person name="Bansal M."/>
            <person name="Baxter L."/>
            <person name="Beisel K.W."/>
            <person name="Bersano T."/>
            <person name="Bono H."/>
            <person name="Chalk A.M."/>
            <person name="Chiu K.P."/>
            <person name="Choudhary V."/>
            <person name="Christoffels A."/>
            <person name="Clutterbuck D.R."/>
            <person name="Crowe M.L."/>
            <person name="Dalla E."/>
            <person name="Dalrymple B.P."/>
            <person name="de Bono B."/>
            <person name="Della Gatta G."/>
            <person name="di Bernardo D."/>
            <person name="Down T."/>
            <person name="Engstrom P."/>
            <person name="Fagiolini M."/>
            <person name="Faulkner G."/>
            <person name="Fletcher C.F."/>
            <person name="Fukushima T."/>
            <person name="Furuno M."/>
            <person name="Futaki S."/>
            <person name="Gariboldi M."/>
            <person name="Georgii-Hemming P."/>
            <person name="Gingeras T.R."/>
            <person name="Gojobori T."/>
            <person name="Green R.E."/>
            <person name="Gustincich S."/>
            <person name="Harbers M."/>
            <person name="Hayashi Y."/>
            <person name="Hensch T.K."/>
            <person name="Hirokawa N."/>
            <person name="Hill D."/>
            <person name="Huminiecki L."/>
            <person name="Iacono M."/>
            <person name="Ikeo K."/>
            <person name="Iwama A."/>
            <person name="Ishikawa T."/>
            <person name="Jakt M."/>
            <person name="Kanapin A."/>
            <person name="Katoh M."/>
            <person name="Kawasawa Y."/>
            <person name="Kelso J."/>
            <person name="Kitamura H."/>
            <person name="Kitano H."/>
            <person name="Kollias G."/>
            <person name="Krishnan S.P."/>
            <person name="Kruger A."/>
            <person name="Kummerfeld S.K."/>
            <person name="Kurochkin I.V."/>
            <person name="Lareau L.F."/>
            <person name="Lazarevic D."/>
            <person name="Lipovich L."/>
            <person name="Liu J."/>
            <person name="Liuni S."/>
            <person name="McWilliam S."/>
            <person name="Madan Babu M."/>
            <person name="Madera M."/>
            <person name="Marchionni L."/>
            <person name="Matsuda H."/>
            <person name="Matsuzawa S."/>
            <person name="Miki H."/>
            <person name="Mignone F."/>
            <person name="Miyake S."/>
            <person name="Morris K."/>
            <person name="Mottagui-Tabar S."/>
            <person name="Mulder N."/>
            <person name="Nakano N."/>
            <person name="Nakauchi H."/>
            <person name="Ng P."/>
            <person name="Nilsson R."/>
            <person name="Nishiguchi S."/>
            <person name="Nishikawa S."/>
            <person name="Nori F."/>
            <person name="Ohara O."/>
            <person name="Okazaki Y."/>
            <person name="Orlando V."/>
            <person name="Pang K.C."/>
            <person name="Pavan W.J."/>
            <person name="Pavesi G."/>
            <person name="Pesole G."/>
            <person name="Petrovsky N."/>
            <person name="Piazza S."/>
            <person name="Reed J."/>
            <person name="Reid J.F."/>
            <person name="Ring B.Z."/>
            <person name="Ringwald M."/>
            <person name="Rost B."/>
            <person name="Ruan Y."/>
            <person name="Salzberg S.L."/>
            <person name="Sandelin A."/>
            <person name="Schneider C."/>
            <person name="Schoenbach C."/>
            <person name="Sekiguchi K."/>
            <person name="Semple C.A."/>
            <person name="Seno S."/>
            <person name="Sessa L."/>
            <person name="Sheng Y."/>
            <person name="Shibata Y."/>
            <person name="Shimada H."/>
            <person name="Shimada K."/>
            <person name="Silva D."/>
            <person name="Sinclair B."/>
            <person name="Sperling S."/>
            <person name="Stupka E."/>
            <person name="Sugiura K."/>
            <person name="Sultana R."/>
            <person name="Takenaka Y."/>
            <person name="Taki K."/>
            <person name="Tammoja K."/>
            <person name="Tan S.L."/>
            <person name="Tang S."/>
            <person name="Taylor M.S."/>
            <person name="Tegner J."/>
            <person name="Teichmann S.A."/>
            <person name="Ueda H.R."/>
            <person name="van Nimwegen E."/>
            <person name="Verardo R."/>
            <person name="Wei C.L."/>
            <person name="Yagi K."/>
            <person name="Yamanishi H."/>
            <person name="Zabarovsky E."/>
            <person name="Zhu S."/>
            <person name="Zimmer A."/>
            <person name="Hide W."/>
            <person name="Bult C."/>
            <person name="Grimmond S.M."/>
            <person name="Teasdale R.D."/>
            <person name="Liu E.T."/>
            <person name="Brusic V."/>
            <person name="Quackenbush J."/>
            <person name="Wahlestedt C."/>
            <person name="Mattick J.S."/>
            <person name="Hume D.A."/>
            <person name="Kai C."/>
            <person name="Sasaki D."/>
            <person name="Tomaru Y."/>
            <person name="Fukuda S."/>
            <person name="Kanamori-Katayama M."/>
            <person name="Suzuki M."/>
            <person name="Aoki J."/>
            <person name="Arakawa T."/>
            <person name="Iida J."/>
            <person name="Imamura K."/>
            <person name="Itoh M."/>
            <person name="Kato T."/>
            <person name="Kawaji H."/>
            <person name="Kawagashira N."/>
            <person name="Kawashima T."/>
            <person name="Kojima M."/>
            <person name="Kondo S."/>
            <person name="Konno H."/>
            <person name="Nakano K."/>
            <person name="Ninomiya N."/>
            <person name="Nishio T."/>
            <person name="Okada M."/>
            <person name="Plessy C."/>
            <person name="Shibata K."/>
            <person name="Shiraki T."/>
            <person name="Suzuki S."/>
            <person name="Tagami M."/>
            <person name="Waki K."/>
            <person name="Watahiki A."/>
            <person name="Okamura-Oho Y."/>
            <person name="Suzuki H."/>
            <person name="Kawai J."/>
            <person name="Hayashizaki Y."/>
        </authorList>
    </citation>
    <scope>NUCLEOTIDE SEQUENCE [LARGE SCALE MRNA]</scope>
    <source>
        <strain>C57BL/6J</strain>
        <tissue>Embryo</tissue>
        <tissue>Tongue</tissue>
    </source>
</reference>
<reference key="2">
    <citation type="journal article" date="2004" name="Genome Res.">
        <title>The status, quality, and expansion of the NIH full-length cDNA project: the Mammalian Gene Collection (MGC).</title>
        <authorList>
            <consortium name="The MGC Project Team"/>
        </authorList>
    </citation>
    <scope>NUCLEOTIDE SEQUENCE [LARGE SCALE MRNA]</scope>
</reference>
<reference key="3">
    <citation type="journal article" date="2010" name="Cell">
        <title>A tissue-specific atlas of mouse protein phosphorylation and expression.</title>
        <authorList>
            <person name="Huttlin E.L."/>
            <person name="Jedrychowski M.P."/>
            <person name="Elias J.E."/>
            <person name="Goswami T."/>
            <person name="Rad R."/>
            <person name="Beausoleil S.A."/>
            <person name="Villen J."/>
            <person name="Haas W."/>
            <person name="Sowa M.E."/>
            <person name="Gygi S.P."/>
        </authorList>
    </citation>
    <scope>IDENTIFICATION BY MASS SPECTROMETRY [LARGE SCALE ANALYSIS]</scope>
    <source>
        <tissue>Brain</tissue>
        <tissue>Brown adipose tissue</tissue>
        <tissue>Heart</tissue>
        <tissue>Kidney</tissue>
        <tissue>Liver</tissue>
        <tissue>Testis</tissue>
    </source>
</reference>
<gene>
    <name type="primary">Dmac2l</name>
    <name evidence="4" type="synonym">Atp5s</name>
    <name type="synonym">Atpw</name>
</gene>